<protein>
    <recommendedName>
        <fullName evidence="4">PopC secretion inhibitor</fullName>
    </recommendedName>
</protein>
<comment type="function">
    <text evidence="2">Inhibitor of protease PopC (PubMed:22404381). In non-starving cells, forms a cytoplasmic complex with PopC and inhibits PopC secretion and activity (PubMed:22404381).</text>
</comment>
<comment type="activity regulation">
    <text evidence="2">In response to starvation, RelA is activated resulting in the accumulation of (p)ppGpp, which causes the degradation of PopD in an FtsH(D)-dependent manner, thereby releasing pre-formed PopC for secretion.</text>
</comment>
<comment type="subunit">
    <text evidence="2">Interacts with PopC in non-starving cells.</text>
</comment>
<comment type="subcellular location">
    <subcellularLocation>
        <location evidence="2">Cytoplasm</location>
    </subcellularLocation>
</comment>
<comment type="disruption phenotype">
    <text evidence="2">Deletion mutant has a severe growth defect, forms tan colonies and fails to develop (PubMed:22404381). Mutant shows increased accumulation of PopC in the supernatant (PubMed:22404381).</text>
</comment>
<reference key="1">
    <citation type="journal article" date="2006" name="Proc. Natl. Acad. Sci. U.S.A.">
        <title>Evolution of sensory complexity recorded in a myxobacterial genome.</title>
        <authorList>
            <person name="Goldman B.S."/>
            <person name="Nierman W.C."/>
            <person name="Kaiser D."/>
            <person name="Slater S.C."/>
            <person name="Durkin A.S."/>
            <person name="Eisen J.A."/>
            <person name="Ronning C.M."/>
            <person name="Barbazuk W.B."/>
            <person name="Blanchard M."/>
            <person name="Field C."/>
            <person name="Halling C."/>
            <person name="Hinkle G."/>
            <person name="Iartchuk O."/>
            <person name="Kim H.S."/>
            <person name="Mackenzie C."/>
            <person name="Madupu R."/>
            <person name="Miller N."/>
            <person name="Shvartsbeyn A."/>
            <person name="Sullivan S.A."/>
            <person name="Vaudin M."/>
            <person name="Wiegand R."/>
            <person name="Kaplan H.B."/>
        </authorList>
    </citation>
    <scope>NUCLEOTIDE SEQUENCE [LARGE SCALE GENOMIC DNA]</scope>
    <source>
        <strain>DK1622</strain>
    </source>
</reference>
<reference key="2">
    <citation type="journal article" date="2012" name="Mol. Microbiol.">
        <title>A RelA-dependent two-tiered regulated proteolysis cascade controls synthesis of a contact-dependent intercellular signal in Myxococcus xanthus.</title>
        <authorList>
            <person name="Konovalova A."/>
            <person name="Loebach S."/>
            <person name="Soegaard-Andersen L."/>
        </authorList>
    </citation>
    <scope>FUNCTION</scope>
    <scope>ACTIVITY REGULATION</scope>
    <scope>INTERACTION WITH POPC</scope>
    <scope>SUBCELLULAR LOCATION</scope>
    <scope>DISRUPTION PHENOTYPE</scope>
    <source>
        <strain>DK101</strain>
    </source>
</reference>
<name>POPD_MYXXD</name>
<keyword id="KW-0963">Cytoplasm</keyword>
<keyword id="KW-1185">Reference proteome</keyword>
<gene>
    <name evidence="3" type="primary">popD</name>
    <name evidence="5" type="ordered locus">MXAN_0207</name>
</gene>
<proteinExistence type="evidence at protein level"/>
<sequence length="156" mass="17340">MNPGSAPWERRTRERMRAMSRKNGEWGDVRVGGVPGLSARVRPLPGAAGADTQPDWIDVTVMPREEPAAASRRRTSPRPPVRSRAEVHQAGLAESAQFHQSLMRWLEAHHLLGAVRSVSEPGSMPMLHLRCAPRVLDQLRRAPEFEAGTMMPLDLI</sequence>
<evidence type="ECO:0000256" key="1">
    <source>
        <dbReference type="SAM" id="MobiDB-lite"/>
    </source>
</evidence>
<evidence type="ECO:0000269" key="2">
    <source>
    </source>
</evidence>
<evidence type="ECO:0000303" key="3">
    <source>
    </source>
</evidence>
<evidence type="ECO:0000305" key="4"/>
<evidence type="ECO:0000312" key="5">
    <source>
        <dbReference type="EMBL" id="ABF90834.1"/>
    </source>
</evidence>
<dbReference type="EMBL" id="CP000113">
    <property type="protein sequence ID" value="ABF90834.1"/>
    <property type="molecule type" value="Genomic_DNA"/>
</dbReference>
<dbReference type="STRING" id="246197.MXAN_0207"/>
<dbReference type="EnsemblBacteria" id="ABF90834">
    <property type="protein sequence ID" value="ABF90834"/>
    <property type="gene ID" value="MXAN_0207"/>
</dbReference>
<dbReference type="KEGG" id="mxa:MXAN_0207"/>
<dbReference type="HOGENOM" id="CLU_153840_0_0_7"/>
<dbReference type="OrthoDB" id="5519513at2"/>
<dbReference type="Proteomes" id="UP000002402">
    <property type="component" value="Chromosome"/>
</dbReference>
<dbReference type="GO" id="GO:0005737">
    <property type="term" value="C:cytoplasm"/>
    <property type="evidence" value="ECO:0007669"/>
    <property type="project" value="UniProtKB-SubCell"/>
</dbReference>
<accession>Q1DFT4</accession>
<feature type="chain" id="PRO_0000458099" description="PopC secretion inhibitor">
    <location>
        <begin position="1"/>
        <end position="156"/>
    </location>
</feature>
<feature type="region of interest" description="Disordered" evidence="1">
    <location>
        <begin position="1"/>
        <end position="89"/>
    </location>
</feature>
<feature type="compositionally biased region" description="Basic and acidic residues" evidence="1">
    <location>
        <begin position="8"/>
        <end position="28"/>
    </location>
</feature>
<organism>
    <name type="scientific">Myxococcus xanthus (strain DK1622)</name>
    <dbReference type="NCBI Taxonomy" id="246197"/>
    <lineage>
        <taxon>Bacteria</taxon>
        <taxon>Pseudomonadati</taxon>
        <taxon>Myxococcota</taxon>
        <taxon>Myxococcia</taxon>
        <taxon>Myxococcales</taxon>
        <taxon>Cystobacterineae</taxon>
        <taxon>Myxococcaceae</taxon>
        <taxon>Myxococcus</taxon>
    </lineage>
</organism>